<name>HEM6_BURL3</name>
<evidence type="ECO:0000255" key="1">
    <source>
        <dbReference type="HAMAP-Rule" id="MF_00333"/>
    </source>
</evidence>
<gene>
    <name evidence="1" type="primary">hemF</name>
    <name type="ordered locus">Bcep18194_A5623</name>
</gene>
<protein>
    <recommendedName>
        <fullName evidence="1">Oxygen-dependent coproporphyrinogen-III oxidase</fullName>
        <shortName evidence="1">CPO</shortName>
        <shortName evidence="1">Coprogen oxidase</shortName>
        <shortName evidence="1">Coproporphyrinogenase</shortName>
        <ecNumber evidence="1">1.3.3.3</ecNumber>
    </recommendedName>
</protein>
<proteinExistence type="inferred from homology"/>
<reference key="1">
    <citation type="submission" date="2005-10" db="EMBL/GenBank/DDBJ databases">
        <title>Complete sequence of chromosome 1 of Burkholderia sp. 383.</title>
        <authorList>
            <consortium name="US DOE Joint Genome Institute"/>
            <person name="Copeland A."/>
            <person name="Lucas S."/>
            <person name="Lapidus A."/>
            <person name="Barry K."/>
            <person name="Detter J.C."/>
            <person name="Glavina T."/>
            <person name="Hammon N."/>
            <person name="Israni S."/>
            <person name="Pitluck S."/>
            <person name="Chain P."/>
            <person name="Malfatti S."/>
            <person name="Shin M."/>
            <person name="Vergez L."/>
            <person name="Schmutz J."/>
            <person name="Larimer F."/>
            <person name="Land M."/>
            <person name="Kyrpides N."/>
            <person name="Lykidis A."/>
            <person name="Richardson P."/>
        </authorList>
    </citation>
    <scope>NUCLEOTIDE SEQUENCE [LARGE SCALE GENOMIC DNA]</scope>
    <source>
        <strain>ATCC 17760 / DSM 23089 / LMG 22485 / NCIMB 9086 / R18194 / 383</strain>
    </source>
</reference>
<sequence length="307" mass="34777">MTDSTYDVARVRTYLQDLQTRIADALGALDGTPLATDAWQRGPAERLRGGGCTRILEGGRVFERAGIGFSDVAGDALPPSASAARPQLAGRGFEALGVSLVLHPRNPYCPTVHMNVRMLIATKPGEEPVFWFGGGMDLTPVYGFEDDARHFHQTCKDALDPFGVELYPRFKKWCDEYFFLKHRNEMRGIGGIFFDDFSEPGFERSFDMMQSVGDAFLQAYLPIVERRAELPYGERERDFQAYRRGRYVEFNLVFDRGTLFGLQSGGRTESILMSMPPVANWRYNWQPEPGSPEARLYSDFIVPRDWI</sequence>
<keyword id="KW-0963">Cytoplasm</keyword>
<keyword id="KW-0350">Heme biosynthesis</keyword>
<keyword id="KW-0479">Metal-binding</keyword>
<keyword id="KW-0560">Oxidoreductase</keyword>
<keyword id="KW-0627">Porphyrin biosynthesis</keyword>
<accession>Q39E99</accession>
<feature type="chain" id="PRO_1000019463" description="Oxygen-dependent coproporphyrinogen-III oxidase">
    <location>
        <begin position="1"/>
        <end position="307"/>
    </location>
</feature>
<feature type="region of interest" description="Important for dimerization" evidence="1">
    <location>
        <begin position="247"/>
        <end position="282"/>
    </location>
</feature>
<feature type="active site" description="Proton donor" evidence="1">
    <location>
        <position position="113"/>
    </location>
</feature>
<feature type="binding site" evidence="1">
    <location>
        <position position="99"/>
    </location>
    <ligand>
        <name>substrate</name>
    </ligand>
</feature>
<feature type="binding site" evidence="1">
    <location>
        <position position="103"/>
    </location>
    <ligand>
        <name>a divalent metal cation</name>
        <dbReference type="ChEBI" id="CHEBI:60240"/>
    </ligand>
</feature>
<feature type="binding site" evidence="1">
    <location>
        <position position="113"/>
    </location>
    <ligand>
        <name>a divalent metal cation</name>
        <dbReference type="ChEBI" id="CHEBI:60240"/>
    </ligand>
</feature>
<feature type="binding site" evidence="1">
    <location>
        <begin position="115"/>
        <end position="117"/>
    </location>
    <ligand>
        <name>substrate</name>
    </ligand>
</feature>
<feature type="binding site" evidence="1">
    <location>
        <position position="152"/>
    </location>
    <ligand>
        <name>a divalent metal cation</name>
        <dbReference type="ChEBI" id="CHEBI:60240"/>
    </ligand>
</feature>
<feature type="binding site" evidence="1">
    <location>
        <position position="182"/>
    </location>
    <ligand>
        <name>a divalent metal cation</name>
        <dbReference type="ChEBI" id="CHEBI:60240"/>
    </ligand>
</feature>
<feature type="binding site" evidence="1">
    <location>
        <begin position="265"/>
        <end position="267"/>
    </location>
    <ligand>
        <name>substrate</name>
    </ligand>
</feature>
<feature type="site" description="Important for dimerization" evidence="1">
    <location>
        <position position="182"/>
    </location>
</feature>
<comment type="function">
    <text evidence="1">Involved in the heme biosynthesis. Catalyzes the aerobic oxidative decarboxylation of propionate groups of rings A and B of coproporphyrinogen-III to yield the vinyl groups in protoporphyrinogen-IX.</text>
</comment>
<comment type="catalytic activity">
    <reaction evidence="1">
        <text>coproporphyrinogen III + O2 + 2 H(+) = protoporphyrinogen IX + 2 CO2 + 2 H2O</text>
        <dbReference type="Rhea" id="RHEA:18257"/>
        <dbReference type="ChEBI" id="CHEBI:15377"/>
        <dbReference type="ChEBI" id="CHEBI:15378"/>
        <dbReference type="ChEBI" id="CHEBI:15379"/>
        <dbReference type="ChEBI" id="CHEBI:16526"/>
        <dbReference type="ChEBI" id="CHEBI:57307"/>
        <dbReference type="ChEBI" id="CHEBI:57309"/>
        <dbReference type="EC" id="1.3.3.3"/>
    </reaction>
</comment>
<comment type="cofactor">
    <cofactor evidence="1">
        <name>a divalent metal cation</name>
        <dbReference type="ChEBI" id="CHEBI:60240"/>
    </cofactor>
</comment>
<comment type="pathway">
    <text evidence="1">Porphyrin-containing compound metabolism; protoporphyrin-IX biosynthesis; protoporphyrinogen-IX from coproporphyrinogen-III (O2 route): step 1/1.</text>
</comment>
<comment type="subunit">
    <text evidence="1">Homodimer.</text>
</comment>
<comment type="subcellular location">
    <subcellularLocation>
        <location evidence="1">Cytoplasm</location>
    </subcellularLocation>
</comment>
<comment type="similarity">
    <text evidence="1">Belongs to the aerobic coproporphyrinogen-III oxidase family.</text>
</comment>
<organism>
    <name type="scientific">Burkholderia lata (strain ATCC 17760 / DSM 23089 / LMG 22485 / NCIMB 9086 / R18194 / 383)</name>
    <dbReference type="NCBI Taxonomy" id="482957"/>
    <lineage>
        <taxon>Bacteria</taxon>
        <taxon>Pseudomonadati</taxon>
        <taxon>Pseudomonadota</taxon>
        <taxon>Betaproteobacteria</taxon>
        <taxon>Burkholderiales</taxon>
        <taxon>Burkholderiaceae</taxon>
        <taxon>Burkholderia</taxon>
        <taxon>Burkholderia cepacia complex</taxon>
    </lineage>
</organism>
<dbReference type="EC" id="1.3.3.3" evidence="1"/>
<dbReference type="EMBL" id="CP000151">
    <property type="protein sequence ID" value="ABB09217.1"/>
    <property type="molecule type" value="Genomic_DNA"/>
</dbReference>
<dbReference type="RefSeq" id="WP_011352743.1">
    <property type="nucleotide sequence ID" value="NC_007510.1"/>
</dbReference>
<dbReference type="SMR" id="Q39E99"/>
<dbReference type="GeneID" id="45095510"/>
<dbReference type="KEGG" id="bur:Bcep18194_A5623"/>
<dbReference type="PATRIC" id="fig|482957.22.peg.2592"/>
<dbReference type="HOGENOM" id="CLU_026169_0_1_4"/>
<dbReference type="UniPathway" id="UPA00251">
    <property type="reaction ID" value="UER00322"/>
</dbReference>
<dbReference type="Proteomes" id="UP000002705">
    <property type="component" value="Chromosome 1"/>
</dbReference>
<dbReference type="GO" id="GO:0005737">
    <property type="term" value="C:cytoplasm"/>
    <property type="evidence" value="ECO:0007669"/>
    <property type="project" value="UniProtKB-SubCell"/>
</dbReference>
<dbReference type="GO" id="GO:0004109">
    <property type="term" value="F:coproporphyrinogen oxidase activity"/>
    <property type="evidence" value="ECO:0007669"/>
    <property type="project" value="UniProtKB-UniRule"/>
</dbReference>
<dbReference type="GO" id="GO:0046872">
    <property type="term" value="F:metal ion binding"/>
    <property type="evidence" value="ECO:0007669"/>
    <property type="project" value="UniProtKB-KW"/>
</dbReference>
<dbReference type="GO" id="GO:0042803">
    <property type="term" value="F:protein homodimerization activity"/>
    <property type="evidence" value="ECO:0000250"/>
    <property type="project" value="UniProtKB"/>
</dbReference>
<dbReference type="GO" id="GO:0006782">
    <property type="term" value="P:protoporphyrinogen IX biosynthetic process"/>
    <property type="evidence" value="ECO:0007669"/>
    <property type="project" value="UniProtKB-UniRule"/>
</dbReference>
<dbReference type="FunFam" id="3.40.1500.10:FF:000001">
    <property type="entry name" value="Oxygen-dependent coproporphyrinogen-III oxidase"/>
    <property type="match status" value="1"/>
</dbReference>
<dbReference type="Gene3D" id="3.40.1500.10">
    <property type="entry name" value="Coproporphyrinogen III oxidase, aerobic"/>
    <property type="match status" value="1"/>
</dbReference>
<dbReference type="HAMAP" id="MF_00333">
    <property type="entry name" value="Coprogen_oxidas"/>
    <property type="match status" value="1"/>
</dbReference>
<dbReference type="InterPro" id="IPR001260">
    <property type="entry name" value="Coprogen_oxidase_aer"/>
</dbReference>
<dbReference type="InterPro" id="IPR036406">
    <property type="entry name" value="Coprogen_oxidase_aer_sf"/>
</dbReference>
<dbReference type="InterPro" id="IPR018375">
    <property type="entry name" value="Coprogen_oxidase_CS"/>
</dbReference>
<dbReference type="NCBIfam" id="NF003727">
    <property type="entry name" value="PRK05330.1"/>
    <property type="match status" value="1"/>
</dbReference>
<dbReference type="PANTHER" id="PTHR10755">
    <property type="entry name" value="COPROPORPHYRINOGEN III OXIDASE, MITOCHONDRIAL"/>
    <property type="match status" value="1"/>
</dbReference>
<dbReference type="PANTHER" id="PTHR10755:SF0">
    <property type="entry name" value="OXYGEN-DEPENDENT COPROPORPHYRINOGEN-III OXIDASE, MITOCHONDRIAL"/>
    <property type="match status" value="1"/>
</dbReference>
<dbReference type="Pfam" id="PF01218">
    <property type="entry name" value="Coprogen_oxidas"/>
    <property type="match status" value="1"/>
</dbReference>
<dbReference type="PIRSF" id="PIRSF000166">
    <property type="entry name" value="Coproporphyri_ox"/>
    <property type="match status" value="1"/>
</dbReference>
<dbReference type="PRINTS" id="PR00073">
    <property type="entry name" value="COPRGNOXDASE"/>
</dbReference>
<dbReference type="SUPFAM" id="SSF102886">
    <property type="entry name" value="Coproporphyrinogen III oxidase"/>
    <property type="match status" value="1"/>
</dbReference>
<dbReference type="PROSITE" id="PS01021">
    <property type="entry name" value="COPROGEN_OXIDASE"/>
    <property type="match status" value="1"/>
</dbReference>